<feature type="chain" id="PRO_0000057783" description="PH domain leucine-rich repeat protein phosphatase 1">
    <location>
        <begin position="1"/>
        <end position="1696"/>
    </location>
</feature>
<feature type="domain" description="PH" evidence="5">
    <location>
        <begin position="499"/>
        <end position="599"/>
    </location>
</feature>
<feature type="repeat" description="LRR 1">
    <location>
        <begin position="601"/>
        <end position="622"/>
    </location>
</feature>
<feature type="repeat" description="LRR 2">
    <location>
        <begin position="624"/>
        <end position="645"/>
    </location>
</feature>
<feature type="repeat" description="LRR 3">
    <location>
        <begin position="655"/>
        <end position="676"/>
    </location>
</feature>
<feature type="repeat" description="LRR 4">
    <location>
        <begin position="678"/>
        <end position="699"/>
    </location>
</feature>
<feature type="repeat" description="LRR 5">
    <location>
        <begin position="701"/>
        <end position="722"/>
    </location>
</feature>
<feature type="repeat" description="LRR 6">
    <location>
        <begin position="724"/>
        <end position="746"/>
    </location>
</feature>
<feature type="repeat" description="LRR 7">
    <location>
        <begin position="836"/>
        <end position="857"/>
    </location>
</feature>
<feature type="repeat" description="LRR 8">
    <location>
        <begin position="858"/>
        <end position="879"/>
    </location>
</feature>
<feature type="repeat" description="LRR 9">
    <location>
        <begin position="881"/>
        <end position="902"/>
    </location>
</feature>
<feature type="repeat" description="LRR 10">
    <location>
        <begin position="904"/>
        <end position="925"/>
    </location>
</feature>
<feature type="repeat" description="LRR 11">
    <location>
        <begin position="926"/>
        <end position="947"/>
    </location>
</feature>
<feature type="repeat" description="LRR 12">
    <location>
        <begin position="950"/>
        <end position="971"/>
    </location>
</feature>
<feature type="repeat" description="LRR 13">
    <location>
        <begin position="976"/>
        <end position="996"/>
    </location>
</feature>
<feature type="repeat" description="LRR 14">
    <location>
        <begin position="1000"/>
        <end position="1021"/>
    </location>
</feature>
<feature type="repeat" description="LRR 15">
    <location>
        <begin position="1024"/>
        <end position="1045"/>
    </location>
</feature>
<feature type="repeat" description="LRR 16">
    <location>
        <begin position="1047"/>
        <end position="1068"/>
    </location>
</feature>
<feature type="repeat" description="LRR 17">
    <location>
        <begin position="1069"/>
        <end position="1090"/>
    </location>
</feature>
<feature type="repeat" description="LRR 18">
    <location>
        <begin position="1092"/>
        <end position="1113"/>
    </location>
</feature>
<feature type="domain" description="PPM-type phosphatase" evidence="6">
    <location>
        <begin position="1138"/>
        <end position="1385"/>
    </location>
</feature>
<feature type="region of interest" description="Disordered" evidence="7">
    <location>
        <begin position="1"/>
        <end position="97"/>
    </location>
</feature>
<feature type="region of interest" description="Disordered" evidence="7">
    <location>
        <begin position="222"/>
        <end position="398"/>
    </location>
</feature>
<feature type="region of interest" description="Disordered" evidence="7">
    <location>
        <begin position="1422"/>
        <end position="1473"/>
    </location>
</feature>
<feature type="region of interest" description="Disordered" evidence="7">
    <location>
        <begin position="1610"/>
        <end position="1696"/>
    </location>
</feature>
<feature type="short sequence motif" description="PDZ-binding">
    <location>
        <begin position="1694"/>
        <end position="1696"/>
    </location>
</feature>
<feature type="compositionally biased region" description="Low complexity" evidence="7">
    <location>
        <begin position="79"/>
        <end position="92"/>
    </location>
</feature>
<feature type="compositionally biased region" description="Polar residues" evidence="7">
    <location>
        <begin position="313"/>
        <end position="325"/>
    </location>
</feature>
<feature type="compositionally biased region" description="Low complexity" evidence="7">
    <location>
        <begin position="1431"/>
        <end position="1452"/>
    </location>
</feature>
<feature type="compositionally biased region" description="Low complexity" evidence="7">
    <location>
        <begin position="1647"/>
        <end position="1660"/>
    </location>
</feature>
<feature type="compositionally biased region" description="Low complexity" evidence="7">
    <location>
        <begin position="1670"/>
        <end position="1680"/>
    </location>
</feature>
<feature type="binding site" evidence="3">
    <location>
        <position position="1173"/>
    </location>
    <ligand>
        <name>Mn(2+)</name>
        <dbReference type="ChEBI" id="CHEBI:29035"/>
        <label>1</label>
    </ligand>
</feature>
<feature type="binding site" evidence="3">
    <location>
        <position position="1173"/>
    </location>
    <ligand>
        <name>Mn(2+)</name>
        <dbReference type="ChEBI" id="CHEBI:29035"/>
        <label>2</label>
    </ligand>
</feature>
<feature type="binding site" evidence="3">
    <location>
        <position position="1174"/>
    </location>
    <ligand>
        <name>Mn(2+)</name>
        <dbReference type="ChEBI" id="CHEBI:29035"/>
        <label>1</label>
    </ligand>
</feature>
<feature type="binding site" evidence="3">
    <location>
        <position position="1337"/>
    </location>
    <ligand>
        <name>Mn(2+)</name>
        <dbReference type="ChEBI" id="CHEBI:29035"/>
        <label>2</label>
    </ligand>
</feature>
<feature type="binding site" evidence="3">
    <location>
        <position position="1376"/>
    </location>
    <ligand>
        <name>Mn(2+)</name>
        <dbReference type="ChEBI" id="CHEBI:29035"/>
        <label>2</label>
    </ligand>
</feature>
<feature type="modified residue" description="N-acetylmethionine" evidence="2">
    <location>
        <position position="1"/>
    </location>
</feature>
<feature type="modified residue" description="Phosphoserine" evidence="2">
    <location>
        <position position="378"/>
    </location>
</feature>
<feature type="splice variant" id="VSP_057811" description="In isoform 2.">
    <location>
        <begin position="1"/>
        <end position="475"/>
    </location>
</feature>
<keyword id="KW-0007">Acetylation</keyword>
<keyword id="KW-0025">Alternative splicing</keyword>
<keyword id="KW-0053">Apoptosis</keyword>
<keyword id="KW-1003">Cell membrane</keyword>
<keyword id="KW-0963">Cytoplasm</keyword>
<keyword id="KW-0378">Hydrolase</keyword>
<keyword id="KW-0433">Leucine-rich repeat</keyword>
<keyword id="KW-0464">Manganese</keyword>
<keyword id="KW-0472">Membrane</keyword>
<keyword id="KW-0479">Metal-binding</keyword>
<keyword id="KW-0539">Nucleus</keyword>
<keyword id="KW-0597">Phosphoprotein</keyword>
<keyword id="KW-0904">Protein phosphatase</keyword>
<keyword id="KW-1185">Reference proteome</keyword>
<keyword id="KW-0677">Repeat</keyword>
<keyword id="KW-0043">Tumor suppressor</keyword>
<protein>
    <recommendedName>
        <fullName>PH domain leucine-rich repeat protein phosphatase 1</fullName>
        <ecNumber>3.1.3.16</ecNumber>
    </recommendedName>
    <alternativeName>
        <fullName>Pleckstrin homology domain-containing family E member 1</fullName>
        <shortName>PH domain-containing family E member 1</shortName>
    </alternativeName>
    <alternativeName>
        <fullName>Suprachiasmatic nucleus circadian oscillatory protein</fullName>
    </alternativeName>
</protein>
<evidence type="ECO:0000250" key="1"/>
<evidence type="ECO:0000250" key="2">
    <source>
        <dbReference type="UniProtKB" id="O60346"/>
    </source>
</evidence>
<evidence type="ECO:0000250" key="3">
    <source>
        <dbReference type="UniProtKB" id="P35813"/>
    </source>
</evidence>
<evidence type="ECO:0000250" key="4">
    <source>
        <dbReference type="UniProtKB" id="Q8CHE4"/>
    </source>
</evidence>
<evidence type="ECO:0000255" key="5">
    <source>
        <dbReference type="PROSITE-ProRule" id="PRU00145"/>
    </source>
</evidence>
<evidence type="ECO:0000255" key="6">
    <source>
        <dbReference type="PROSITE-ProRule" id="PRU01082"/>
    </source>
</evidence>
<evidence type="ECO:0000256" key="7">
    <source>
        <dbReference type="SAM" id="MobiDB-lite"/>
    </source>
</evidence>
<evidence type="ECO:0000269" key="8">
    <source>
    </source>
</evidence>
<evidence type="ECO:0000269" key="9">
    <source>
    </source>
</evidence>
<evidence type="ECO:0000269" key="10">
    <source>
    </source>
</evidence>
<evidence type="ECO:0000269" key="11">
    <source>
    </source>
</evidence>
<sequence>MEPAAAAPAQRLADPTGEDRAPAAAAAAEGGRSPDSVLSAAAPSGGNGGAAREEAPCEAPPGPLPGRAGGTGRRRRRGVPQPAAGGAAPVTAAGGGANSLLLRRGRLKRNLSAAASSSSSPSSASSAAGGLPASCSASASLCTRSLDRKTLLQKHRQLLQLQPSDRDWVRHQLQRGCVHVFDRHMASSYLRPVLCTLDTTAAEVAARLLQLGHKGGGVVKVLGHGPPPAAAPAASDQTPATELGRDVEPPPSSSTVGAVRGPARAPPADLPLPGGAWTRCAPRVNPAPSDSSPGELFAGGPCSPSRAPRPASDTESFSLSPSAESVSDRLDPYSSGGGSSSSSEELEADPATVLTGPSGPPHHPVRSSQPRPPSPKTSALLQPKAPTGVDGTGLVVGEGPGDDKAVAAAAPGVPLWTPGRIRETVQKTSSPPSLYVQLHGETTRRLEADEKPLQIQNDYLFQLGFGELWRVQEEGMDSEIGCLIRFYAGKPHSTGSSERIQLSGMYNVRKGKMQLPVNRWTRRQVILCGTCLIVSSVKDSSSGKMHVLPLIGGKVEEVKKHQHCLAFSSSGPQSQTYYICFDTFTEYLRWLRQVSKVASQRISSVDLSCCSLEHLPANLFYSQDLTHLNLKQNFLRQNPSLPAARGLGELQRFTKLKSLNLSNNHLGAFPSAVCSIPTLAELNVSCNALQEVPAAVGAMQNLQTFLLDGNFLQSLPAELENMHQLSYLGLSFNEFTDIPEVLEKLTAVDKLCMAGNCMETLRLQALRRMPHIKHVDLRLNILRKLITDEVDFLQHVTQLDLRDNKLGDLDAMIFNNIEVLHCERNQLVTLNICGYFLKALYASSNELVQLDVYPVPNYLSYMDVSRNCLESVPEWVCESRKLEVLDIGHNQICELPARLFCNSSLRKLLAGHNRLARLPERLERTSVEVLDVQHNQIIELPPNLLMKADSLRFLNASANKLETLPPATLSEETSSILQELYLTNNSLTDKCVPLLTGHPRLKILHMAYNRLQSFPASKMAKLEELEEIDISGNKLKAIPTTIMNCRRMHTVIAHSNCIEVFPEVMQLPEVKCVDLSCNELSEITLPENLPPKLQELDLTGNPRLALDHKSLELLNNIRCFKIDQPSAGDASGAPAVWSHGYTEASGVKNKLCVAALSVNNFRDNREALYGVFDGDRNVEVPYLLQCTMSDILAEELQKTKNEEEYMVNTFIVMQRKLGTAGQKLGGAAVLCHIRHDPVDLGGSFTLTSANVGKCQTVLCRNGKPLSLSRSYTMSCEEERKRIKQHKAIITEDGKVNGVTESTRILGYTFLHPSVVPRPHVQSVLLTPQDEFFILGSKGLWDSLSIEEAVEAVRNVPDALAAAKKLCTLAQSYGCHDSISAVVVQLSVTEDSFCCCELSVGGSMPPPSPGIFPPSVSMVIKDRPSDGLGVPSSSSGMASEISSELSTSEMSSEVGSTASDEPPSGALSESSPAYPSEQRCMLHPVCLSNSFQRQLSSATFSSAFSDNGLDSDDEEPIEGVFSNGSRVEVEVDIHCSRAKEKERQQHLLQVPAEASDEGIVISANEDESGLSKKTDISAVGTIGRRRANGSVPPQERSHNVIEVATDAPLRKPGGYFAAPAQPDPDDQFIIPPELEEEVKEIMKHHQEQQQQQQQQQQQQQQQPPPPPQPPQAQAQAQAQAQRPFQMDHLPDCYDTPL</sequence>
<name>PHLP1_RAT</name>
<gene>
    <name type="primary">Phlpp1</name>
    <name type="synonym">Phlpp</name>
    <name type="synonym">Plekhe1</name>
    <name type="synonym">Scop</name>
</gene>
<dbReference type="EC" id="3.1.3.16"/>
<dbReference type="EMBL" id="AB023624">
    <property type="protein sequence ID" value="BAA77767.1"/>
    <property type="molecule type" value="mRNA"/>
</dbReference>
<dbReference type="RefSeq" id="NP_067689.1">
    <property type="nucleotide sequence ID" value="NM_021657.1"/>
</dbReference>
<dbReference type="SMR" id="Q9WTR8"/>
<dbReference type="BioGRID" id="248740">
    <property type="interactions" value="1"/>
</dbReference>
<dbReference type="FunCoup" id="Q9WTR8">
    <property type="interactions" value="1515"/>
</dbReference>
<dbReference type="IntAct" id="Q9WTR8">
    <property type="interactions" value="1"/>
</dbReference>
<dbReference type="STRING" id="10116.ENSRNOP00000003840"/>
<dbReference type="PhosphoSitePlus" id="Q9WTR8"/>
<dbReference type="PaxDb" id="10116-ENSRNOP00000003840"/>
<dbReference type="GeneID" id="59265"/>
<dbReference type="KEGG" id="rno:59265"/>
<dbReference type="UCSC" id="RGD:621308">
    <molecule id="Q9WTR8-1"/>
    <property type="organism name" value="rat"/>
</dbReference>
<dbReference type="AGR" id="RGD:621308"/>
<dbReference type="CTD" id="23239"/>
<dbReference type="RGD" id="621308">
    <property type="gene designation" value="Phlpp1"/>
</dbReference>
<dbReference type="eggNOG" id="KOG0618">
    <property type="taxonomic scope" value="Eukaryota"/>
</dbReference>
<dbReference type="InParanoid" id="Q9WTR8"/>
<dbReference type="PhylomeDB" id="Q9WTR8"/>
<dbReference type="Reactome" id="R-RNO-199418">
    <property type="pathway name" value="Negative regulation of the PI3K/AKT network"/>
</dbReference>
<dbReference type="PRO" id="PR:Q9WTR8"/>
<dbReference type="Proteomes" id="UP000002494">
    <property type="component" value="Unplaced"/>
</dbReference>
<dbReference type="GO" id="GO:0005737">
    <property type="term" value="C:cytoplasm"/>
    <property type="evidence" value="ECO:0000314"/>
    <property type="project" value="UniProtKB"/>
</dbReference>
<dbReference type="GO" id="GO:0031965">
    <property type="term" value="C:nuclear membrane"/>
    <property type="evidence" value="ECO:0000314"/>
    <property type="project" value="UniProtKB"/>
</dbReference>
<dbReference type="GO" id="GO:0005654">
    <property type="term" value="C:nucleoplasm"/>
    <property type="evidence" value="ECO:0000314"/>
    <property type="project" value="UniProtKB"/>
</dbReference>
<dbReference type="GO" id="GO:0005886">
    <property type="term" value="C:plasma membrane"/>
    <property type="evidence" value="ECO:0000314"/>
    <property type="project" value="UniProtKB"/>
</dbReference>
<dbReference type="GO" id="GO:0046872">
    <property type="term" value="F:metal ion binding"/>
    <property type="evidence" value="ECO:0007669"/>
    <property type="project" value="UniProtKB-KW"/>
</dbReference>
<dbReference type="GO" id="GO:0004722">
    <property type="term" value="F:protein serine/threonine phosphatase activity"/>
    <property type="evidence" value="ECO:0000314"/>
    <property type="project" value="RGD"/>
</dbReference>
<dbReference type="GO" id="GO:0006915">
    <property type="term" value="P:apoptotic process"/>
    <property type="evidence" value="ECO:0007669"/>
    <property type="project" value="UniProtKB-KW"/>
</dbReference>
<dbReference type="GO" id="GO:0007623">
    <property type="term" value="P:circadian rhythm"/>
    <property type="evidence" value="ECO:0000270"/>
    <property type="project" value="RGD"/>
</dbReference>
<dbReference type="GO" id="GO:0009649">
    <property type="term" value="P:entrainment of circadian clock"/>
    <property type="evidence" value="ECO:0000266"/>
    <property type="project" value="RGD"/>
</dbReference>
<dbReference type="GO" id="GO:0021766">
    <property type="term" value="P:hippocampus development"/>
    <property type="evidence" value="ECO:0000270"/>
    <property type="project" value="RGD"/>
</dbReference>
<dbReference type="GO" id="GO:0035556">
    <property type="term" value="P:intracellular signal transduction"/>
    <property type="evidence" value="ECO:0000318"/>
    <property type="project" value="GO_Central"/>
</dbReference>
<dbReference type="GO" id="GO:1902532">
    <property type="term" value="P:negative regulation of intracellular signal transduction"/>
    <property type="evidence" value="ECO:0000315"/>
    <property type="project" value="RGD"/>
</dbReference>
<dbReference type="GO" id="GO:0051898">
    <property type="term" value="P:negative regulation of phosphatidylinositol 3-kinase/protein kinase B signal transduction"/>
    <property type="evidence" value="ECO:0000315"/>
    <property type="project" value="UniProtKB"/>
</dbReference>
<dbReference type="GO" id="GO:0051897">
    <property type="term" value="P:positive regulation of phosphatidylinositol 3-kinase/protein kinase B signal transduction"/>
    <property type="evidence" value="ECO:0000315"/>
    <property type="project" value="UniProtKB"/>
</dbReference>
<dbReference type="GO" id="GO:0042981">
    <property type="term" value="P:regulation of apoptotic process"/>
    <property type="evidence" value="ECO:0000266"/>
    <property type="project" value="RGD"/>
</dbReference>
<dbReference type="GO" id="GO:0046328">
    <property type="term" value="P:regulation of JNK cascade"/>
    <property type="evidence" value="ECO:0000266"/>
    <property type="project" value="RGD"/>
</dbReference>
<dbReference type="GO" id="GO:0043408">
    <property type="term" value="P:regulation of MAPK cascade"/>
    <property type="evidence" value="ECO:0000266"/>
    <property type="project" value="RGD"/>
</dbReference>
<dbReference type="GO" id="GO:1900744">
    <property type="term" value="P:regulation of p38MAPK cascade"/>
    <property type="evidence" value="ECO:0000266"/>
    <property type="project" value="RGD"/>
</dbReference>
<dbReference type="GO" id="GO:0002667">
    <property type="term" value="P:regulation of T cell anergy"/>
    <property type="evidence" value="ECO:0000266"/>
    <property type="project" value="RGD"/>
</dbReference>
<dbReference type="CDD" id="cd13322">
    <property type="entry name" value="PH_PHLPP-like"/>
    <property type="match status" value="1"/>
</dbReference>
<dbReference type="CDD" id="cd00143">
    <property type="entry name" value="PP2Cc"/>
    <property type="match status" value="1"/>
</dbReference>
<dbReference type="CDD" id="cd17240">
    <property type="entry name" value="RA_PHLPP1"/>
    <property type="match status" value="1"/>
</dbReference>
<dbReference type="FunFam" id="3.80.10.10:FF:000278">
    <property type="entry name" value="PH domain and leucine rich repeat protein phosphatase 1"/>
    <property type="match status" value="1"/>
</dbReference>
<dbReference type="FunFam" id="3.80.10.10:FF:000345">
    <property type="entry name" value="PH domain and leucine rich repeat protein phosphatase 1"/>
    <property type="match status" value="1"/>
</dbReference>
<dbReference type="FunFam" id="3.80.10.10:FF:000027">
    <property type="entry name" value="PH domain and leucine rich repeat protein phosphatase 2"/>
    <property type="match status" value="1"/>
</dbReference>
<dbReference type="FunFam" id="3.60.40.10:FF:000003">
    <property type="entry name" value="PH domain and leucine-rich repeat protein phosphatase 1"/>
    <property type="match status" value="1"/>
</dbReference>
<dbReference type="Gene3D" id="2.30.29.30">
    <property type="entry name" value="Pleckstrin-homology domain (PH domain)/Phosphotyrosine-binding domain (PTB)"/>
    <property type="match status" value="1"/>
</dbReference>
<dbReference type="Gene3D" id="3.60.40.10">
    <property type="entry name" value="PPM-type phosphatase domain"/>
    <property type="match status" value="1"/>
</dbReference>
<dbReference type="Gene3D" id="3.80.10.10">
    <property type="entry name" value="Ribonuclease Inhibitor"/>
    <property type="match status" value="3"/>
</dbReference>
<dbReference type="InterPro" id="IPR001611">
    <property type="entry name" value="Leu-rich_rpt"/>
</dbReference>
<dbReference type="InterPro" id="IPR003591">
    <property type="entry name" value="Leu-rich_rpt_typical-subtyp"/>
</dbReference>
<dbReference type="InterPro" id="IPR032675">
    <property type="entry name" value="LRR_dom_sf"/>
</dbReference>
<dbReference type="InterPro" id="IPR050216">
    <property type="entry name" value="LRR_domain-containing"/>
</dbReference>
<dbReference type="InterPro" id="IPR011993">
    <property type="entry name" value="PH-like_dom_sf"/>
</dbReference>
<dbReference type="InterPro" id="IPR001849">
    <property type="entry name" value="PH_domain"/>
</dbReference>
<dbReference type="InterPro" id="IPR036457">
    <property type="entry name" value="PPM-type-like_dom_sf"/>
</dbReference>
<dbReference type="InterPro" id="IPR001932">
    <property type="entry name" value="PPM-type_phosphatase-like_dom"/>
</dbReference>
<dbReference type="InterPro" id="IPR055071">
    <property type="entry name" value="RA_PHLPP-like"/>
</dbReference>
<dbReference type="InterPro" id="IPR001763">
    <property type="entry name" value="Rhodanese-like_dom"/>
</dbReference>
<dbReference type="PANTHER" id="PTHR48051">
    <property type="match status" value="1"/>
</dbReference>
<dbReference type="PANTHER" id="PTHR48051:SF43">
    <property type="entry name" value="PH DOMAIN AND LEUCINE RICH REPEAT PROTEIN PHOSPHATASE 1"/>
    <property type="match status" value="1"/>
</dbReference>
<dbReference type="Pfam" id="PF00560">
    <property type="entry name" value="LRR_1"/>
    <property type="match status" value="1"/>
</dbReference>
<dbReference type="Pfam" id="PF13516">
    <property type="entry name" value="LRR_6"/>
    <property type="match status" value="1"/>
</dbReference>
<dbReference type="Pfam" id="PF13855">
    <property type="entry name" value="LRR_8"/>
    <property type="match status" value="2"/>
</dbReference>
<dbReference type="Pfam" id="PF00169">
    <property type="entry name" value="PH"/>
    <property type="match status" value="1"/>
</dbReference>
<dbReference type="Pfam" id="PF00481">
    <property type="entry name" value="PP2C"/>
    <property type="match status" value="1"/>
</dbReference>
<dbReference type="Pfam" id="PF23010">
    <property type="entry name" value="RA_3"/>
    <property type="match status" value="1"/>
</dbReference>
<dbReference type="SMART" id="SM00364">
    <property type="entry name" value="LRR_BAC"/>
    <property type="match status" value="10"/>
</dbReference>
<dbReference type="SMART" id="SM00369">
    <property type="entry name" value="LRR_TYP"/>
    <property type="match status" value="9"/>
</dbReference>
<dbReference type="SMART" id="SM00332">
    <property type="entry name" value="PP2Cc"/>
    <property type="match status" value="1"/>
</dbReference>
<dbReference type="SUPFAM" id="SSF52058">
    <property type="entry name" value="L domain-like"/>
    <property type="match status" value="2"/>
</dbReference>
<dbReference type="SUPFAM" id="SSF50729">
    <property type="entry name" value="PH domain-like"/>
    <property type="match status" value="1"/>
</dbReference>
<dbReference type="SUPFAM" id="SSF81606">
    <property type="entry name" value="PP2C-like"/>
    <property type="match status" value="1"/>
</dbReference>
<dbReference type="PROSITE" id="PS51450">
    <property type="entry name" value="LRR"/>
    <property type="match status" value="17"/>
</dbReference>
<dbReference type="PROSITE" id="PS50003">
    <property type="entry name" value="PH_DOMAIN"/>
    <property type="match status" value="1"/>
</dbReference>
<dbReference type="PROSITE" id="PS51746">
    <property type="entry name" value="PPM_2"/>
    <property type="match status" value="1"/>
</dbReference>
<organism>
    <name type="scientific">Rattus norvegicus</name>
    <name type="common">Rat</name>
    <dbReference type="NCBI Taxonomy" id="10116"/>
    <lineage>
        <taxon>Eukaryota</taxon>
        <taxon>Metazoa</taxon>
        <taxon>Chordata</taxon>
        <taxon>Craniata</taxon>
        <taxon>Vertebrata</taxon>
        <taxon>Euteleostomi</taxon>
        <taxon>Mammalia</taxon>
        <taxon>Eutheria</taxon>
        <taxon>Euarchontoglires</taxon>
        <taxon>Glires</taxon>
        <taxon>Rodentia</taxon>
        <taxon>Myomorpha</taxon>
        <taxon>Muroidea</taxon>
        <taxon>Muridae</taxon>
        <taxon>Murinae</taxon>
        <taxon>Rattus</taxon>
    </lineage>
</organism>
<accession>Q9WTR8</accession>
<reference key="1">
    <citation type="journal article" date="1999" name="FEBS Lett.">
        <title>SCOP, a novel gene product expressed in a circadian manner in rat suprachiasmatic nucleus.</title>
        <authorList>
            <person name="Shimizu K."/>
            <person name="Okada M."/>
            <person name="Takano A."/>
            <person name="Nagai K."/>
        </authorList>
    </citation>
    <scope>NUCLEOTIDE SEQUENCE [MRNA]</scope>
    <scope>TISSUE SPECIFICITY</scope>
    <scope>DEVELOPMENTAL STAGE</scope>
    <source>
        <tissue>Brain</tissue>
    </source>
</reference>
<reference key="2">
    <citation type="journal article" date="2003" name="J. Biol. Chem.">
        <title>Suprachiasmatic nucleus circadian oscillatory protein, a novel binding partner of K-Ras in the membrane rafts, negatively regulates MAPK pathway.</title>
        <authorList>
            <person name="Shimizu K."/>
            <person name="Okada M."/>
            <person name="Nagai K."/>
            <person name="Fukada Y."/>
        </authorList>
    </citation>
    <scope>FUNCTION</scope>
    <scope>SUBCELLULAR LOCATION</scope>
    <scope>INTERACTION WITH KRAS</scope>
</reference>
<reference key="3">
    <citation type="journal article" date="2010" name="J. Neurochem.">
        <title>Serine/threonine kinase akt activation regulates the activity of retinal serine/threonine phosphatases, PHLPP and PHLPPL.</title>
        <authorList>
            <person name="Kanan Y."/>
            <person name="Matsumoto H."/>
            <person name="Song H."/>
            <person name="Sokolov M."/>
            <person name="Anderson R.E."/>
            <person name="Rajala R.V."/>
        </authorList>
    </citation>
    <scope>FUNCTION</scope>
    <scope>ALTERNATIVE SPLICING</scope>
    <scope>TISSUE SPECIFICITY (ISOFORMS 1 AND 2)</scope>
    <scope>INDUCTION BY INSULIN</scope>
</reference>
<reference key="4">
    <citation type="journal article" date="2010" name="J. Neurochem.">
        <title>PHLPP1 splice variants differentially regulate AKT and PKCalpha signaling in hippocampal neurons: characterization of PHLPP proteins in the adult hippocampus.</title>
        <authorList>
            <person name="Jackson T.C."/>
            <person name="Verrier J.D."/>
            <person name="Semple-Rowland S."/>
            <person name="Kumar A."/>
            <person name="Foster T.C."/>
        </authorList>
    </citation>
    <scope>ALTERNATIVE SPLICING</scope>
    <scope>TISSUE SPECIFICITY</scope>
    <scope>SUBCELLULAR LOCATION</scope>
    <scope>FUNCTION</scope>
</reference>
<comment type="function">
    <text evidence="2 4 9 11">Protein phosphatase involved in regulation of Akt and PKC signaling. Mediates dephosphorylation in the C-terminal domain hydrophobic motif of members of the AGC Ser/Thr protein kinase family; specifically acts on 'Ser-473' of AKT2 and AKT3, 'Ser-660' of PRKCB and 'Ser-657' of PRKCA (PubMed:20819118). Isoform 2 seems to have a major role in regulating Akt signaling in hippocampal neurons while isoform 1 may promote Akt and PKC activation and inhibit ERK signaling (PubMed:20819118). Akt regulates the balance between cell survival and apoptosis through a cascade that primarily alters the function of transcription factors that regulate pro- and antiapoptotic genes. Dephosphorylation of 'Ser-473' of Akt triggers apoptosis and suppression of tumor growth. Dephosphorylation of PRKCA and PRKCB leads to their destabilization and degradation. Dephosphorylates STK4 on 'Thr-387' leading to STK4 activation and apoptosis (By similarity). Dephosphorylates RPS6KB1 and is involved in regulation of cap-dependent translation (By similarity). Inhibits cancer cell proliferation and may act as a tumor suppressor (By similarity). Dephosphorylates RAF1 inhibiting its kinase activity (By similarity). May act as a negative regulator of K-Ras signaling in membrane rafts (PubMed:12594205). Involved in the hippocampus-dependent long-term memory formation (By similarity). Involved in circadian control by regulating the consolidation of circadian periodicity after resetting (By similarity). Involved in development and function of regulatory T-cells (By similarity).</text>
</comment>
<comment type="catalytic activity">
    <reaction>
        <text>O-phospho-L-seryl-[protein] + H2O = L-seryl-[protein] + phosphate</text>
        <dbReference type="Rhea" id="RHEA:20629"/>
        <dbReference type="Rhea" id="RHEA-COMP:9863"/>
        <dbReference type="Rhea" id="RHEA-COMP:11604"/>
        <dbReference type="ChEBI" id="CHEBI:15377"/>
        <dbReference type="ChEBI" id="CHEBI:29999"/>
        <dbReference type="ChEBI" id="CHEBI:43474"/>
        <dbReference type="ChEBI" id="CHEBI:83421"/>
        <dbReference type="EC" id="3.1.3.16"/>
    </reaction>
</comment>
<comment type="catalytic activity">
    <reaction>
        <text>O-phospho-L-threonyl-[protein] + H2O = L-threonyl-[protein] + phosphate</text>
        <dbReference type="Rhea" id="RHEA:47004"/>
        <dbReference type="Rhea" id="RHEA-COMP:11060"/>
        <dbReference type="Rhea" id="RHEA-COMP:11605"/>
        <dbReference type="ChEBI" id="CHEBI:15377"/>
        <dbReference type="ChEBI" id="CHEBI:30013"/>
        <dbReference type="ChEBI" id="CHEBI:43474"/>
        <dbReference type="ChEBI" id="CHEBI:61977"/>
        <dbReference type="EC" id="3.1.3.16"/>
    </reaction>
</comment>
<comment type="cofactor">
    <cofactor evidence="1">
        <name>Mn(2+)</name>
        <dbReference type="ChEBI" id="CHEBI:29035"/>
    </cofactor>
    <text evidence="1">Binds 2 manganese ions per subunit.</text>
</comment>
<comment type="activity regulation">
    <text evidence="2">Insensitive to okadaic acid. Deubiquitination by WDR48-USP12 complex positively regulates PHLPP1 stability.</text>
</comment>
<comment type="subunit">
    <text evidence="2 9">Interacts with the nucleotide free form of K-Ras (KRAS) via its LRR repeats (PubMed:12594205). Interacts with AKT2, AKT3 and PRKCB isoform beta-II. Interacts with WDR48 and USP12 (By similarity).</text>
</comment>
<comment type="subcellular location">
    <subcellularLocation>
        <location evidence="9">Cytoplasm</location>
    </subcellularLocation>
    <subcellularLocation>
        <location evidence="9">Membrane</location>
        <topology evidence="9">Peripheral membrane protein</topology>
    </subcellularLocation>
</comment>
<comment type="subcellular location">
    <molecule>Isoform 1</molecule>
    <subcellularLocation>
        <location evidence="11">Cytoplasm</location>
    </subcellularLocation>
    <subcellularLocation>
        <location evidence="11">Cell membrane</location>
    </subcellularLocation>
</comment>
<comment type="subcellular location">
    <molecule>Isoform 2</molecule>
    <subcellularLocation>
        <location evidence="11">Nucleus</location>
        <location evidence="11">Nucleoplasm</location>
    </subcellularLocation>
    <subcellularLocation>
        <location evidence="11">Nucleus membrane</location>
    </subcellularLocation>
    <subcellularLocation>
        <location evidence="11">Cytoplasm</location>
    </subcellularLocation>
    <subcellularLocation>
        <location evidence="11">Cell membrane</location>
    </subcellularLocation>
</comment>
<comment type="alternative products">
    <event type="alternative splicing"/>
    <isoform>
        <id>Q9WTR8-1</id>
        <name>1</name>
        <name>beta</name>
        <sequence type="displayed"/>
    </isoform>
    <isoform>
        <id>Q9WTR8-2</id>
        <name>2</name>
        <name>alpha</name>
        <sequence type="described" ref="VSP_057811"/>
    </isoform>
</comment>
<comment type="tissue specificity">
    <text evidence="8 10 11">Mainly present in brain (at protein level) (PubMed:10570941). Isoform 2 is more abundant in adult brain neurons than isoform 1 in (PubMed:20819118). Isoforms 1 and 2 are expressed in the retina but not found in rod outer segments (PubMed:20089132).</text>
</comment>
<comment type="developmental stage">
    <text evidence="8 11">In the suprachiasmatic nucleus, it increases during subjective night with a peak at midnight under constant dark conditions. Expressed at a constant level in neurons throughout the brain (at protein level) (PubMed:10570941). Isoform 2 expression increases over development and maturation in the hippocampus. Isoform 1 expression is low in embryonic stages, increases during postnatal development and is falling back to low embryonic levels in adulthood (PubMed:20819118).</text>
</comment>
<comment type="induction">
    <text evidence="10">Inhibited by insulin in a PI3K-dependent manner.</text>
</comment>
<comment type="domain">
    <text evidence="1">The PH domain is required for interaction with PRKCB and its dephosphorylation.</text>
</comment>
<proteinExistence type="evidence at protein level"/>